<name>COPZ_STAEQ</name>
<gene>
    <name type="primary">copZ</name>
    <name type="ordered locus">SERP2132</name>
</gene>
<accession>Q5HL55</accession>
<evidence type="ECO:0000250" key="1"/>
<evidence type="ECO:0000255" key="2">
    <source>
        <dbReference type="PROSITE-ProRule" id="PRU00280"/>
    </source>
</evidence>
<dbReference type="EMBL" id="CP000029">
    <property type="protein sequence ID" value="AAW53032.1"/>
    <property type="molecule type" value="Genomic_DNA"/>
</dbReference>
<dbReference type="RefSeq" id="WP_001832344.1">
    <property type="nucleotide sequence ID" value="NC_002976.3"/>
</dbReference>
<dbReference type="SMR" id="Q5HL55"/>
<dbReference type="STRING" id="176279.SERP2132"/>
<dbReference type="GeneID" id="50017798"/>
<dbReference type="KEGG" id="ser:SERP2132"/>
<dbReference type="eggNOG" id="COG2608">
    <property type="taxonomic scope" value="Bacteria"/>
</dbReference>
<dbReference type="HOGENOM" id="CLU_134973_10_4_9"/>
<dbReference type="Proteomes" id="UP000000531">
    <property type="component" value="Chromosome"/>
</dbReference>
<dbReference type="GO" id="GO:0005737">
    <property type="term" value="C:cytoplasm"/>
    <property type="evidence" value="ECO:0007669"/>
    <property type="project" value="UniProtKB-SubCell"/>
</dbReference>
<dbReference type="GO" id="GO:0005507">
    <property type="term" value="F:copper ion binding"/>
    <property type="evidence" value="ECO:0007669"/>
    <property type="project" value="InterPro"/>
</dbReference>
<dbReference type="GO" id="GO:0006825">
    <property type="term" value="P:copper ion transport"/>
    <property type="evidence" value="ECO:0007669"/>
    <property type="project" value="InterPro"/>
</dbReference>
<dbReference type="CDD" id="cd00371">
    <property type="entry name" value="HMA"/>
    <property type="match status" value="1"/>
</dbReference>
<dbReference type="FunFam" id="3.30.70.100:FF:000005">
    <property type="entry name" value="Copper-exporting P-type ATPase A"/>
    <property type="match status" value="1"/>
</dbReference>
<dbReference type="Gene3D" id="3.30.70.100">
    <property type="match status" value="1"/>
</dbReference>
<dbReference type="InterPro" id="IPR049740">
    <property type="entry name" value="CopZ"/>
</dbReference>
<dbReference type="InterPro" id="IPR000428">
    <property type="entry name" value="Cu-bd"/>
</dbReference>
<dbReference type="InterPro" id="IPR017969">
    <property type="entry name" value="Heavy-metal-associated_CS"/>
</dbReference>
<dbReference type="InterPro" id="IPR006122">
    <property type="entry name" value="HMA_Cu_ion-bd"/>
</dbReference>
<dbReference type="InterPro" id="IPR006121">
    <property type="entry name" value="HMA_dom"/>
</dbReference>
<dbReference type="InterPro" id="IPR036163">
    <property type="entry name" value="HMA_dom_sf"/>
</dbReference>
<dbReference type="NCBIfam" id="NF033795">
    <property type="entry name" value="chaper_CopZ_Bs"/>
    <property type="match status" value="1"/>
</dbReference>
<dbReference type="NCBIfam" id="TIGR00003">
    <property type="entry name" value="copper ion binding protein"/>
    <property type="match status" value="1"/>
</dbReference>
<dbReference type="PANTHER" id="PTHR46594">
    <property type="entry name" value="P-TYPE CATION-TRANSPORTING ATPASE"/>
    <property type="match status" value="1"/>
</dbReference>
<dbReference type="PANTHER" id="PTHR46594:SF4">
    <property type="entry name" value="P-TYPE CATION-TRANSPORTING ATPASE"/>
    <property type="match status" value="1"/>
</dbReference>
<dbReference type="Pfam" id="PF00403">
    <property type="entry name" value="HMA"/>
    <property type="match status" value="1"/>
</dbReference>
<dbReference type="PRINTS" id="PR00944">
    <property type="entry name" value="CUEXPORT"/>
</dbReference>
<dbReference type="SUPFAM" id="SSF55008">
    <property type="entry name" value="HMA, heavy metal-associated domain"/>
    <property type="match status" value="1"/>
</dbReference>
<dbReference type="PROSITE" id="PS01047">
    <property type="entry name" value="HMA_1"/>
    <property type="match status" value="1"/>
</dbReference>
<dbReference type="PROSITE" id="PS50846">
    <property type="entry name" value="HMA_2"/>
    <property type="match status" value="1"/>
</dbReference>
<keyword id="KW-0143">Chaperone</keyword>
<keyword id="KW-0186">Copper</keyword>
<keyword id="KW-0963">Cytoplasm</keyword>
<keyword id="KW-0479">Metal-binding</keyword>
<keyword id="KW-1185">Reference proteome</keyword>
<protein>
    <recommendedName>
        <fullName>Copper chaperone CopZ</fullName>
    </recommendedName>
</protein>
<reference key="1">
    <citation type="journal article" date="2005" name="J. Bacteriol.">
        <title>Insights on evolution of virulence and resistance from the complete genome analysis of an early methicillin-resistant Staphylococcus aureus strain and a biofilm-producing methicillin-resistant Staphylococcus epidermidis strain.</title>
        <authorList>
            <person name="Gill S.R."/>
            <person name="Fouts D.E."/>
            <person name="Archer G.L."/>
            <person name="Mongodin E.F."/>
            <person name="DeBoy R.T."/>
            <person name="Ravel J."/>
            <person name="Paulsen I.T."/>
            <person name="Kolonay J.F."/>
            <person name="Brinkac L.M."/>
            <person name="Beanan M.J."/>
            <person name="Dodson R.J."/>
            <person name="Daugherty S.C."/>
            <person name="Madupu R."/>
            <person name="Angiuoli S.V."/>
            <person name="Durkin A.S."/>
            <person name="Haft D.H."/>
            <person name="Vamathevan J.J."/>
            <person name="Khouri H."/>
            <person name="Utterback T.R."/>
            <person name="Lee C."/>
            <person name="Dimitrov G."/>
            <person name="Jiang L."/>
            <person name="Qin H."/>
            <person name="Weidman J."/>
            <person name="Tran K."/>
            <person name="Kang K.H."/>
            <person name="Hance I.R."/>
            <person name="Nelson K.E."/>
            <person name="Fraser C.M."/>
        </authorList>
    </citation>
    <scope>NUCLEOTIDE SEQUENCE [LARGE SCALE GENOMIC DNA]</scope>
    <source>
        <strain>ATCC 35984 / DSM 28319 / BCRC 17069 / CCUG 31568 / BM 3577 / RP62A</strain>
    </source>
</reference>
<sequence>MTQKIIKVEGMSCEHCRNAVESALAKLNGVSSAEVNLDENHVRVEYNDSKVTFENMKEAIEEQGYDVK</sequence>
<feature type="chain" id="PRO_0000351285" description="Copper chaperone CopZ">
    <location>
        <begin position="1"/>
        <end position="68"/>
    </location>
</feature>
<feature type="domain" description="HMA" evidence="2">
    <location>
        <begin position="2"/>
        <end position="68"/>
    </location>
</feature>
<feature type="binding site" evidence="2">
    <location>
        <position position="13"/>
    </location>
    <ligand>
        <name>Cu cation</name>
        <dbReference type="ChEBI" id="CHEBI:23378"/>
    </ligand>
</feature>
<feature type="binding site" evidence="2">
    <location>
        <position position="16"/>
    </location>
    <ligand>
        <name>Cu cation</name>
        <dbReference type="ChEBI" id="CHEBI:23378"/>
    </ligand>
</feature>
<comment type="function">
    <text evidence="1">Chaperone that serves for the intracellular sequestration and transport of Cu(+). Delivers Cu(+) to the copper-exporting P-type ATPase A (CopA) (By similarity).</text>
</comment>
<comment type="subcellular location">
    <subcellularLocation>
        <location evidence="1">Cytoplasm</location>
    </subcellularLocation>
</comment>
<proteinExistence type="inferred from homology"/>
<organism>
    <name type="scientific">Staphylococcus epidermidis (strain ATCC 35984 / DSM 28319 / BCRC 17069 / CCUG 31568 / BM 3577 / RP62A)</name>
    <dbReference type="NCBI Taxonomy" id="176279"/>
    <lineage>
        <taxon>Bacteria</taxon>
        <taxon>Bacillati</taxon>
        <taxon>Bacillota</taxon>
        <taxon>Bacilli</taxon>
        <taxon>Bacillales</taxon>
        <taxon>Staphylococcaceae</taxon>
        <taxon>Staphylococcus</taxon>
    </lineage>
</organism>